<proteinExistence type="evidence at transcript level"/>
<protein>
    <recommendedName>
        <fullName>Protein PROPEP890</fullName>
        <shortName>GmPROPEP890</shortName>
    </recommendedName>
    <component>
        <recommendedName>
            <fullName>Peptide GmPep890</fullName>
        </recommendedName>
    </component>
</protein>
<evidence type="ECO:0000256" key="1">
    <source>
        <dbReference type="SAM" id="MobiDB-lite"/>
    </source>
</evidence>
<evidence type="ECO:0000269" key="2">
    <source>
    </source>
</evidence>
<evidence type="ECO:0000305" key="3">
    <source>
    </source>
</evidence>
<dbReference type="STRING" id="3847.K7LFJ0"/>
<dbReference type="PaxDb" id="3847-GLYMA09G36370.1"/>
<dbReference type="EnsemblPlants" id="KRH39938">
    <property type="protein sequence ID" value="KRH39938"/>
    <property type="gene ID" value="GLYMA_09G229300"/>
</dbReference>
<dbReference type="Gramene" id="KRH39938">
    <property type="protein sequence ID" value="KRH39938"/>
    <property type="gene ID" value="GLYMA_09G229300"/>
</dbReference>
<dbReference type="HOGENOM" id="CLU_2729896_0_0_1"/>
<dbReference type="InParanoid" id="K7LFJ0"/>
<dbReference type="OMA" id="HNNEALP"/>
<dbReference type="OrthoDB" id="1414561at2759"/>
<dbReference type="Proteomes" id="UP000008827">
    <property type="component" value="Chromosome 9"/>
</dbReference>
<dbReference type="GO" id="GO:0006952">
    <property type="term" value="P:defense response"/>
    <property type="evidence" value="ECO:0007669"/>
    <property type="project" value="UniProtKB-KW"/>
</dbReference>
<name>PP890_SOYBN</name>
<organism>
    <name type="scientific">Glycine max</name>
    <name type="common">Soybean</name>
    <name type="synonym">Glycine hispida</name>
    <dbReference type="NCBI Taxonomy" id="3847"/>
    <lineage>
        <taxon>Eukaryota</taxon>
        <taxon>Viridiplantae</taxon>
        <taxon>Streptophyta</taxon>
        <taxon>Embryophyta</taxon>
        <taxon>Tracheophyta</taxon>
        <taxon>Spermatophyta</taxon>
        <taxon>Magnoliopsida</taxon>
        <taxon>eudicotyledons</taxon>
        <taxon>Gunneridae</taxon>
        <taxon>Pentapetalae</taxon>
        <taxon>rosids</taxon>
        <taxon>fabids</taxon>
        <taxon>Fabales</taxon>
        <taxon>Fabaceae</taxon>
        <taxon>Papilionoideae</taxon>
        <taxon>50 kb inversion clade</taxon>
        <taxon>NPAAA clade</taxon>
        <taxon>indigoferoid/millettioid clade</taxon>
        <taxon>Phaseoleae</taxon>
        <taxon>Glycine</taxon>
        <taxon>Glycine subgen. Soja</taxon>
    </lineage>
</organism>
<reference key="1">
    <citation type="journal article" date="2011" name="Plant Physiol.">
        <title>GmPep914, an eight-amino acid peptide isolated from soybean leaves, activates defense-related genes.</title>
        <authorList>
            <person name="Yamaguchi Y."/>
            <person name="Barona G."/>
            <person name="Ryan C.A."/>
            <person name="Pearce G."/>
        </authorList>
    </citation>
    <scope>NUCLEOTIDE SEQUENCE [MRNA]</scope>
    <scope>FUNCTION</scope>
    <scope>INDUCTION</scope>
    <scope>TISSUE SPECIFICITY</scope>
    <source>
        <strain>cv. A3525</strain>
    </source>
</reference>
<reference key="2">
    <citation type="journal article" date="2010" name="Nature">
        <title>Genome sequence of the palaeopolyploid soybean.</title>
        <authorList>
            <person name="Schmutz J."/>
            <person name="Cannon S.B."/>
            <person name="Schlueter J."/>
            <person name="Ma J."/>
            <person name="Mitros T."/>
            <person name="Nelson W."/>
            <person name="Hyten D.L."/>
            <person name="Song Q."/>
            <person name="Thelen J.J."/>
            <person name="Cheng J."/>
            <person name="Xu D."/>
            <person name="Hellsten U."/>
            <person name="May G.D."/>
            <person name="Yu Y."/>
            <person name="Sakurai T."/>
            <person name="Umezawa T."/>
            <person name="Bhattacharyya M.K."/>
            <person name="Sandhu D."/>
            <person name="Valliyodan B."/>
            <person name="Lindquist E."/>
            <person name="Peto M."/>
            <person name="Grant D."/>
            <person name="Shu S."/>
            <person name="Goodstein D."/>
            <person name="Barry K."/>
            <person name="Futrell-Griggs M."/>
            <person name="Abernathy B."/>
            <person name="Du J."/>
            <person name="Tian Z."/>
            <person name="Zhu L."/>
            <person name="Gill N."/>
            <person name="Joshi T."/>
            <person name="Libault M."/>
            <person name="Sethuraman A."/>
            <person name="Zhang X.-C."/>
            <person name="Shinozaki K."/>
            <person name="Nguyen H.T."/>
            <person name="Wing R.A."/>
            <person name="Cregan P."/>
            <person name="Specht J."/>
            <person name="Grimwood J."/>
            <person name="Rokhsar D."/>
            <person name="Stacey G."/>
            <person name="Shoemaker R.C."/>
            <person name="Jackson S.A."/>
        </authorList>
    </citation>
    <scope>NUCLEOTIDE SEQUENCE [LARGE SCALE GENOMIC DNA]</scope>
    <source>
        <strain>cv. Williams 82</strain>
    </source>
</reference>
<sequence>MVSCFDFFLSLNFGKMAKRFVWRTDKPQADLPQTPNSQVRIVSRDLPRGGNY</sequence>
<gene>
    <name type="primary">PROPEP890</name>
    <name type="ordered locus">Glyma09g36370</name>
</gene>
<keyword id="KW-0611">Plant defense</keyword>
<keyword id="KW-1185">Reference proteome</keyword>
<comment type="function">
    <molecule>Peptide GmPep890</molecule>
    <text evidence="2">Produces a rapid alkalinization of the cellular media and the induction of defense-related genes, including chitinase 1b, chalcone synthase and CYP93A1. Not active in tobacco or Arabidopsis. The receptor for GmPep890 is probably different from the receptor for GmSubPep.</text>
</comment>
<comment type="tissue specificity">
    <text evidence="2">Expressed in roots. Barely detected in flowers.</text>
</comment>
<comment type="induction">
    <text evidence="2">Up-regulated by the GmPep890 peptide and methyl salicylate. No induction by methyl jasmonate.</text>
</comment>
<comment type="caution">
    <text evidence="3">The full-length coding region in cv. A3525 has been amplified by RT-PCR and sequenced, but not submitted to the EMBL/GenBank/DDBJ databases (PubMed:21478368).</text>
</comment>
<feature type="chain" id="PRO_0000430189" description="Protein PROPEP890">
    <location>
        <begin position="1"/>
        <end position="52"/>
    </location>
</feature>
<feature type="peptide" id="PRO_0000430190" description="Peptide GmPep890">
    <location>
        <begin position="45"/>
        <end position="52"/>
    </location>
</feature>
<feature type="region of interest" description="Disordered" evidence="1">
    <location>
        <begin position="27"/>
        <end position="52"/>
    </location>
</feature>
<feature type="compositionally biased region" description="Polar residues" evidence="1">
    <location>
        <begin position="31"/>
        <end position="40"/>
    </location>
</feature>
<feature type="compositionally biased region" description="Basic and acidic residues" evidence="1">
    <location>
        <begin position="42"/>
        <end position="52"/>
    </location>
</feature>
<accession>K7LFJ0</accession>